<organism>
    <name type="scientific">Sodalis glossinidius (strain morsitans)</name>
    <dbReference type="NCBI Taxonomy" id="343509"/>
    <lineage>
        <taxon>Bacteria</taxon>
        <taxon>Pseudomonadati</taxon>
        <taxon>Pseudomonadota</taxon>
        <taxon>Gammaproteobacteria</taxon>
        <taxon>Enterobacterales</taxon>
        <taxon>Bruguierivoracaceae</taxon>
        <taxon>Sodalis</taxon>
    </lineage>
</organism>
<name>RLME_SODGM</name>
<evidence type="ECO:0000255" key="1">
    <source>
        <dbReference type="HAMAP-Rule" id="MF_01547"/>
    </source>
</evidence>
<keyword id="KW-0963">Cytoplasm</keyword>
<keyword id="KW-0489">Methyltransferase</keyword>
<keyword id="KW-0698">rRNA processing</keyword>
<keyword id="KW-0949">S-adenosyl-L-methionine</keyword>
<keyword id="KW-0808">Transferase</keyword>
<proteinExistence type="inferred from homology"/>
<comment type="function">
    <text evidence="1">Specifically methylates the uridine in position 2552 of 23S rRNA at the 2'-O position of the ribose in the fully assembled 50S ribosomal subunit.</text>
</comment>
<comment type="catalytic activity">
    <reaction evidence="1">
        <text>uridine(2552) in 23S rRNA + S-adenosyl-L-methionine = 2'-O-methyluridine(2552) in 23S rRNA + S-adenosyl-L-homocysteine + H(+)</text>
        <dbReference type="Rhea" id="RHEA:42720"/>
        <dbReference type="Rhea" id="RHEA-COMP:10202"/>
        <dbReference type="Rhea" id="RHEA-COMP:10203"/>
        <dbReference type="ChEBI" id="CHEBI:15378"/>
        <dbReference type="ChEBI" id="CHEBI:57856"/>
        <dbReference type="ChEBI" id="CHEBI:59789"/>
        <dbReference type="ChEBI" id="CHEBI:65315"/>
        <dbReference type="ChEBI" id="CHEBI:74478"/>
        <dbReference type="EC" id="2.1.1.166"/>
    </reaction>
</comment>
<comment type="subcellular location">
    <subcellularLocation>
        <location evidence="1">Cytoplasm</location>
    </subcellularLocation>
</comment>
<comment type="similarity">
    <text evidence="1">Belongs to the class I-like SAM-binding methyltransferase superfamily. RNA methyltransferase RlmE family.</text>
</comment>
<gene>
    <name evidence="1" type="primary">rlmE</name>
    <name evidence="1" type="synonym">ftsJ</name>
    <name evidence="1" type="synonym">rrmJ</name>
    <name type="ordered locus">SG0370</name>
</gene>
<protein>
    <recommendedName>
        <fullName evidence="1">Ribosomal RNA large subunit methyltransferase E</fullName>
        <ecNumber evidence="1">2.1.1.166</ecNumber>
    </recommendedName>
    <alternativeName>
        <fullName evidence="1">23S rRNA Um2552 methyltransferase</fullName>
    </alternativeName>
    <alternativeName>
        <fullName evidence="1">rRNA (uridine-2'-O-)-methyltransferase</fullName>
    </alternativeName>
</protein>
<reference key="1">
    <citation type="journal article" date="2006" name="Genome Res.">
        <title>Massive genome erosion and functional adaptations provide insights into the symbiotic lifestyle of Sodalis glossinidius in the tsetse host.</title>
        <authorList>
            <person name="Toh H."/>
            <person name="Weiss B.L."/>
            <person name="Perkin S.A.H."/>
            <person name="Yamashita A."/>
            <person name="Oshima K."/>
            <person name="Hattori M."/>
            <person name="Aksoy S."/>
        </authorList>
    </citation>
    <scope>NUCLEOTIDE SEQUENCE [LARGE SCALE GENOMIC DNA]</scope>
    <source>
        <strain>morsitans</strain>
    </source>
</reference>
<dbReference type="EC" id="2.1.1.166" evidence="1"/>
<dbReference type="EMBL" id="AP008232">
    <property type="protein sequence ID" value="BAE73645.1"/>
    <property type="molecule type" value="Genomic_DNA"/>
</dbReference>
<dbReference type="RefSeq" id="WP_011410233.1">
    <property type="nucleotide sequence ID" value="NC_007712.1"/>
</dbReference>
<dbReference type="SMR" id="Q2NW30"/>
<dbReference type="STRING" id="343509.SG0370"/>
<dbReference type="KEGG" id="sgl:SG0370"/>
<dbReference type="eggNOG" id="COG0293">
    <property type="taxonomic scope" value="Bacteria"/>
</dbReference>
<dbReference type="HOGENOM" id="CLU_009422_4_0_6"/>
<dbReference type="OrthoDB" id="9790080at2"/>
<dbReference type="BioCyc" id="SGLO343509:SGP1_RS03505-MONOMER"/>
<dbReference type="Proteomes" id="UP000001932">
    <property type="component" value="Chromosome"/>
</dbReference>
<dbReference type="GO" id="GO:0005737">
    <property type="term" value="C:cytoplasm"/>
    <property type="evidence" value="ECO:0007669"/>
    <property type="project" value="UniProtKB-SubCell"/>
</dbReference>
<dbReference type="GO" id="GO:0008650">
    <property type="term" value="F:rRNA (uridine-2'-O-)-methyltransferase activity"/>
    <property type="evidence" value="ECO:0007669"/>
    <property type="project" value="UniProtKB-UniRule"/>
</dbReference>
<dbReference type="CDD" id="cd02440">
    <property type="entry name" value="AdoMet_MTases"/>
    <property type="match status" value="1"/>
</dbReference>
<dbReference type="FunFam" id="3.40.50.150:FF:000005">
    <property type="entry name" value="Ribosomal RNA large subunit methyltransferase E"/>
    <property type="match status" value="1"/>
</dbReference>
<dbReference type="Gene3D" id="3.40.50.150">
    <property type="entry name" value="Vaccinia Virus protein VP39"/>
    <property type="match status" value="1"/>
</dbReference>
<dbReference type="HAMAP" id="MF_01547">
    <property type="entry name" value="RNA_methyltr_E"/>
    <property type="match status" value="1"/>
</dbReference>
<dbReference type="InterPro" id="IPR050082">
    <property type="entry name" value="RNA_methyltr_RlmE"/>
</dbReference>
<dbReference type="InterPro" id="IPR002877">
    <property type="entry name" value="RNA_MeTrfase_FtsJ_dom"/>
</dbReference>
<dbReference type="InterPro" id="IPR015507">
    <property type="entry name" value="rRNA-MeTfrase_E"/>
</dbReference>
<dbReference type="InterPro" id="IPR004512">
    <property type="entry name" value="rRNA_MeTrfase_gammaproteobac"/>
</dbReference>
<dbReference type="InterPro" id="IPR029063">
    <property type="entry name" value="SAM-dependent_MTases_sf"/>
</dbReference>
<dbReference type="NCBIfam" id="NF008390">
    <property type="entry name" value="PRK11188.1"/>
    <property type="match status" value="1"/>
</dbReference>
<dbReference type="NCBIfam" id="TIGR00438">
    <property type="entry name" value="rrmJ"/>
    <property type="match status" value="1"/>
</dbReference>
<dbReference type="PANTHER" id="PTHR10920">
    <property type="entry name" value="RIBOSOMAL RNA METHYLTRANSFERASE"/>
    <property type="match status" value="1"/>
</dbReference>
<dbReference type="PANTHER" id="PTHR10920:SF18">
    <property type="entry name" value="RRNA METHYLTRANSFERASE 2, MITOCHONDRIAL"/>
    <property type="match status" value="1"/>
</dbReference>
<dbReference type="Pfam" id="PF01728">
    <property type="entry name" value="FtsJ"/>
    <property type="match status" value="1"/>
</dbReference>
<dbReference type="PIRSF" id="PIRSF005461">
    <property type="entry name" value="23S_rRNA_mtase"/>
    <property type="match status" value="1"/>
</dbReference>
<dbReference type="SUPFAM" id="SSF53335">
    <property type="entry name" value="S-adenosyl-L-methionine-dependent methyltransferases"/>
    <property type="match status" value="1"/>
</dbReference>
<accession>Q2NW30</accession>
<sequence>MATKKRSASSSRWLQEHFSDKYVQQAQKKGLRSRAWFKLDEIQQSDKLFRPGMTVVDLGAAPGGWSQYVATQIGGKGRIIACDILPMDPMVGVDFLQGDFREPLVLQALLERVGEQKVQVVVSDMAPNMSGTPAVDIPKSMYLVELALDMCRDVLAPGGNFLVKVFQGEGFDEYLREIRSLFTKVKIRKPDASRARSREVYIVATGRKL</sequence>
<feature type="chain" id="PRO_0000282806" description="Ribosomal RNA large subunit methyltransferase E">
    <location>
        <begin position="1"/>
        <end position="209"/>
    </location>
</feature>
<feature type="active site" description="Proton acceptor" evidence="1">
    <location>
        <position position="164"/>
    </location>
</feature>
<feature type="binding site" evidence="1">
    <location>
        <position position="63"/>
    </location>
    <ligand>
        <name>S-adenosyl-L-methionine</name>
        <dbReference type="ChEBI" id="CHEBI:59789"/>
    </ligand>
</feature>
<feature type="binding site" evidence="1">
    <location>
        <position position="65"/>
    </location>
    <ligand>
        <name>S-adenosyl-L-methionine</name>
        <dbReference type="ChEBI" id="CHEBI:59789"/>
    </ligand>
</feature>
<feature type="binding site" evidence="1">
    <location>
        <position position="83"/>
    </location>
    <ligand>
        <name>S-adenosyl-L-methionine</name>
        <dbReference type="ChEBI" id="CHEBI:59789"/>
    </ligand>
</feature>
<feature type="binding site" evidence="1">
    <location>
        <position position="99"/>
    </location>
    <ligand>
        <name>S-adenosyl-L-methionine</name>
        <dbReference type="ChEBI" id="CHEBI:59789"/>
    </ligand>
</feature>
<feature type="binding site" evidence="1">
    <location>
        <position position="124"/>
    </location>
    <ligand>
        <name>S-adenosyl-L-methionine</name>
        <dbReference type="ChEBI" id="CHEBI:59789"/>
    </ligand>
</feature>